<proteinExistence type="inferred from homology"/>
<comment type="catalytic activity">
    <reaction evidence="1">
        <text>L-seryl-[protein] + ATP = O-phospho-L-seryl-[protein] + ADP + H(+)</text>
        <dbReference type="Rhea" id="RHEA:17989"/>
        <dbReference type="Rhea" id="RHEA-COMP:9863"/>
        <dbReference type="Rhea" id="RHEA-COMP:11604"/>
        <dbReference type="ChEBI" id="CHEBI:15378"/>
        <dbReference type="ChEBI" id="CHEBI:29999"/>
        <dbReference type="ChEBI" id="CHEBI:30616"/>
        <dbReference type="ChEBI" id="CHEBI:83421"/>
        <dbReference type="ChEBI" id="CHEBI:456216"/>
        <dbReference type="EC" id="2.7.11.1"/>
    </reaction>
</comment>
<comment type="catalytic activity">
    <reaction evidence="1">
        <text>L-threonyl-[protein] + ATP = O-phospho-L-threonyl-[protein] + ADP + H(+)</text>
        <dbReference type="Rhea" id="RHEA:46608"/>
        <dbReference type="Rhea" id="RHEA-COMP:11060"/>
        <dbReference type="Rhea" id="RHEA-COMP:11605"/>
        <dbReference type="ChEBI" id="CHEBI:15378"/>
        <dbReference type="ChEBI" id="CHEBI:30013"/>
        <dbReference type="ChEBI" id="CHEBI:30616"/>
        <dbReference type="ChEBI" id="CHEBI:61977"/>
        <dbReference type="ChEBI" id="CHEBI:456216"/>
        <dbReference type="EC" id="2.7.11.1"/>
    </reaction>
</comment>
<comment type="cofactor">
    <cofactor evidence="1">
        <name>Mn(2+)</name>
        <dbReference type="ChEBI" id="CHEBI:29035"/>
    </cofactor>
</comment>
<comment type="PTM">
    <text evidence="1">Undergoes autophosphorylation in the catalytic domain.</text>
</comment>
<comment type="similarity">
    <text evidence="1 5">Belongs to the protein kinase superfamily. STE Ser/Thr protein kinase family. STE20 subfamily.</text>
</comment>
<organism>
    <name type="scientific">Dictyostelium discoideum</name>
    <name type="common">Social amoeba</name>
    <dbReference type="NCBI Taxonomy" id="44689"/>
    <lineage>
        <taxon>Eukaryota</taxon>
        <taxon>Amoebozoa</taxon>
        <taxon>Evosea</taxon>
        <taxon>Eumycetozoa</taxon>
        <taxon>Dictyostelia</taxon>
        <taxon>Dictyosteliales</taxon>
        <taxon>Dictyosteliaceae</taxon>
        <taxon>Dictyostelium</taxon>
    </lineage>
</organism>
<evidence type="ECO:0000250" key="1">
    <source>
        <dbReference type="UniProtKB" id="O61125"/>
    </source>
</evidence>
<evidence type="ECO:0000250" key="2">
    <source>
        <dbReference type="UniProtKB" id="P28523"/>
    </source>
</evidence>
<evidence type="ECO:0000255" key="3">
    <source>
        <dbReference type="PROSITE-ProRule" id="PRU00159"/>
    </source>
</evidence>
<evidence type="ECO:0000256" key="4">
    <source>
        <dbReference type="SAM" id="MobiDB-lite"/>
    </source>
</evidence>
<evidence type="ECO:0000269" key="5">
    <source>
    </source>
</evidence>
<evidence type="ECO:0000312" key="6">
    <source>
        <dbReference type="EMBL" id="EAL69242.1"/>
    </source>
</evidence>
<sequence>MSDDKYHHDKHHDKHHIDSKQSTAAALSSSSTLASSSSMTTTTTTTSTTTTAASPITPKPRKNYPNSADQYELKETIGKGGSGLVQRAICLPFQENVAIKIIDLEHCKNVSLEEIRKEIQAMSLCHHPNVVAYHTSFVYNESLWVIMDFLSAGSCSDIMRFSFPQGFEEHVIATILKEALKAICYFHKTGRIHRDIKSGNILIDSNGNIQLSDFGVSATLIDTGETSRNTFVGTPCWMAPEIMEQVNYDYAVDIWSFGITALELARGKAPFAEYPPMKVLLLTLQNPPPSLEGDGESKWSHSFKDLVEKCLQKDPSKRPLPSKLLEHRFFKQAKKPDYLVQHILAKLPPLGQRYQMLSEDSFAMLRNTSSPQFDTGHSNSADEWIFPNENNDNNNSSTTTTTTTTTTTNPSNNNNNNNNKTKENLTQSPFETPSHTPSTSPGSTPSHSRTSTPTSNHTALGSSSTVVPPPVVPLTLPTAIPVTAAAYHQQQQHHHLSHSSGSIPNHNASSNLGASAHSNVHGLAHSSIHPTSSAASTTVVNNTQQPQTLQPPQQQHQLQQPIKTPSPINAINIVKLNQSDLITPPKTSPKKEGSIPSSSSHGNIPSLVTTSPKSPLQHQQQIPQQQQDPAMINSNNSSISSNGAYNRELISASGSALSKPPSPSSDKENNSTSKSNKSKSRQSSRASSLSESSDSTSHTSSSDEHSSRYESDRKSYKKKKSSSSSSNSKRDRERERDRDRSNKTYKNSRSRNVSRDRERERDRHNRSRDRDRERERERDRDRERDRDRSRDRSRDRSRDRERDRSRDRSRDRDRSRDRSRDRSRERDRDRSRDRSRDRSRSRDSDSRDRSRDRSRSHSNRRRSRSRDSRNKSRDRSSDSDRSRDRSRDRDYKSSKYKKSSRGTSGRKNNKIQSKLDSQATHISYLEDKISTLTNWLQQQNLLNTSNGQVLSPTDPNLVSKLQTQLDVLQSENSYLRNENINLKTIVNGSNSTNNSLNQSSGMAFRNSVSSLHQLNMSNSSNNSRPQTQ</sequence>
<name>FRAY2_DICDI</name>
<reference evidence="6" key="1">
    <citation type="journal article" date="2002" name="Nature">
        <title>Sequence and analysis of chromosome 2 of Dictyostelium discoideum.</title>
        <authorList>
            <person name="Gloeckner G."/>
            <person name="Eichinger L."/>
            <person name="Szafranski K."/>
            <person name="Pachebat J.A."/>
            <person name="Bankier A.T."/>
            <person name="Dear P.H."/>
            <person name="Lehmann R."/>
            <person name="Baumgart C."/>
            <person name="Parra G."/>
            <person name="Abril J.F."/>
            <person name="Guigo R."/>
            <person name="Kumpf K."/>
            <person name="Tunggal B."/>
            <person name="Cox E.C."/>
            <person name="Quail M.A."/>
            <person name="Platzer M."/>
            <person name="Rosenthal A."/>
            <person name="Noegel A.A."/>
        </authorList>
    </citation>
    <scope>NUCLEOTIDE SEQUENCE [LARGE SCALE GENOMIC DNA]</scope>
    <source>
        <strain evidence="6">AX4</strain>
    </source>
</reference>
<reference evidence="6" key="2">
    <citation type="journal article" date="2005" name="Nature">
        <title>The genome of the social amoeba Dictyostelium discoideum.</title>
        <authorList>
            <person name="Eichinger L."/>
            <person name="Pachebat J.A."/>
            <person name="Gloeckner G."/>
            <person name="Rajandream M.A."/>
            <person name="Sucgang R."/>
            <person name="Berriman M."/>
            <person name="Song J."/>
            <person name="Olsen R."/>
            <person name="Szafranski K."/>
            <person name="Xu Q."/>
            <person name="Tunggal B."/>
            <person name="Kummerfeld S."/>
            <person name="Madera M."/>
            <person name="Konfortov B.A."/>
            <person name="Rivero F."/>
            <person name="Bankier A.T."/>
            <person name="Lehmann R."/>
            <person name="Hamlin N."/>
            <person name="Davies R."/>
            <person name="Gaudet P."/>
            <person name="Fey P."/>
            <person name="Pilcher K."/>
            <person name="Chen G."/>
            <person name="Saunders D."/>
            <person name="Sodergren E.J."/>
            <person name="Davis P."/>
            <person name="Kerhornou A."/>
            <person name="Nie X."/>
            <person name="Hall N."/>
            <person name="Anjard C."/>
            <person name="Hemphill L."/>
            <person name="Bason N."/>
            <person name="Farbrother P."/>
            <person name="Desany B."/>
            <person name="Just E."/>
            <person name="Morio T."/>
            <person name="Rost R."/>
            <person name="Churcher C.M."/>
            <person name="Cooper J."/>
            <person name="Haydock S."/>
            <person name="van Driessche N."/>
            <person name="Cronin A."/>
            <person name="Goodhead I."/>
            <person name="Muzny D.M."/>
            <person name="Mourier T."/>
            <person name="Pain A."/>
            <person name="Lu M."/>
            <person name="Harper D."/>
            <person name="Lindsay R."/>
            <person name="Hauser H."/>
            <person name="James K.D."/>
            <person name="Quiles M."/>
            <person name="Madan Babu M."/>
            <person name="Saito T."/>
            <person name="Buchrieser C."/>
            <person name="Wardroper A."/>
            <person name="Felder M."/>
            <person name="Thangavelu M."/>
            <person name="Johnson D."/>
            <person name="Knights A."/>
            <person name="Loulseged H."/>
            <person name="Mungall K.L."/>
            <person name="Oliver K."/>
            <person name="Price C."/>
            <person name="Quail M.A."/>
            <person name="Urushihara H."/>
            <person name="Hernandez J."/>
            <person name="Rabbinowitsch E."/>
            <person name="Steffen D."/>
            <person name="Sanders M."/>
            <person name="Ma J."/>
            <person name="Kohara Y."/>
            <person name="Sharp S."/>
            <person name="Simmonds M.N."/>
            <person name="Spiegler S."/>
            <person name="Tivey A."/>
            <person name="Sugano S."/>
            <person name="White B."/>
            <person name="Walker D."/>
            <person name="Woodward J.R."/>
            <person name="Winckler T."/>
            <person name="Tanaka Y."/>
            <person name="Shaulsky G."/>
            <person name="Schleicher M."/>
            <person name="Weinstock G.M."/>
            <person name="Rosenthal A."/>
            <person name="Cox E.C."/>
            <person name="Chisholm R.L."/>
            <person name="Gibbs R.A."/>
            <person name="Loomis W.F."/>
            <person name="Platzer M."/>
            <person name="Kay R.R."/>
            <person name="Williams J.G."/>
            <person name="Dear P.H."/>
            <person name="Noegel A.A."/>
            <person name="Barrell B.G."/>
            <person name="Kuspa A."/>
        </authorList>
    </citation>
    <scope>NUCLEOTIDE SEQUENCE [LARGE SCALE GENOMIC DNA]</scope>
    <source>
        <strain evidence="6">AX4</strain>
    </source>
</reference>
<reference evidence="1" key="3">
    <citation type="journal article" date="2006" name="Eur. J. Cell Biol.">
        <title>Characterization of the Ste20-like kinase Krs1 of Dictyostelium discoideum.</title>
        <authorList>
            <person name="Arasada R."/>
            <person name="Son H."/>
            <person name="Ramalingam N."/>
            <person name="Eichinger L."/>
            <person name="Schleicher M."/>
            <person name="Rohlfs M."/>
        </authorList>
    </citation>
    <scope>CLASSIFICATION</scope>
</reference>
<accession>Q551H4</accession>
<accession>Q869U1</accession>
<protein>
    <recommendedName>
        <fullName evidence="1 6">Serine/threonine-protein kinase fray2</fullName>
        <ecNumber>2.7.11.1</ecNumber>
    </recommendedName>
    <alternativeName>
        <fullName evidence="1">STE20-like kinase fray2</fullName>
    </alternativeName>
</protein>
<dbReference type="EC" id="2.7.11.1"/>
<dbReference type="EMBL" id="AAFI02000015">
    <property type="protein sequence ID" value="EAL69242.1"/>
    <property type="molecule type" value="Genomic_DNA"/>
</dbReference>
<dbReference type="RefSeq" id="XP_643160.1">
    <property type="nucleotide sequence ID" value="XM_638068.1"/>
</dbReference>
<dbReference type="SMR" id="Q551H4"/>
<dbReference type="FunCoup" id="Q551H4">
    <property type="interactions" value="99"/>
</dbReference>
<dbReference type="STRING" id="44689.Q551H4"/>
<dbReference type="GlyGen" id="Q551H4">
    <property type="glycosylation" value="1 site"/>
</dbReference>
<dbReference type="PaxDb" id="44689-DDB0229911"/>
<dbReference type="EnsemblProtists" id="EAL69242">
    <property type="protein sequence ID" value="EAL69242"/>
    <property type="gene ID" value="DDB_G0276577"/>
</dbReference>
<dbReference type="GeneID" id="8620567"/>
<dbReference type="KEGG" id="ddi:DDB_G0276577"/>
<dbReference type="dictyBase" id="DDB_G0276577">
    <property type="gene designation" value="fray2"/>
</dbReference>
<dbReference type="VEuPathDB" id="AmoebaDB:DDB_G0276577"/>
<dbReference type="eggNOG" id="KOG0582">
    <property type="taxonomic scope" value="Eukaryota"/>
</dbReference>
<dbReference type="HOGENOM" id="CLU_294823_0_0_1"/>
<dbReference type="InParanoid" id="Q551H4"/>
<dbReference type="OMA" id="RKQHKDH"/>
<dbReference type="PRO" id="PR:Q551H4"/>
<dbReference type="Proteomes" id="UP000002195">
    <property type="component" value="Chromosome 2"/>
</dbReference>
<dbReference type="GO" id="GO:1902554">
    <property type="term" value="C:serine/threonine protein kinase complex"/>
    <property type="evidence" value="ECO:0000318"/>
    <property type="project" value="GO_Central"/>
</dbReference>
<dbReference type="GO" id="GO:0005524">
    <property type="term" value="F:ATP binding"/>
    <property type="evidence" value="ECO:0007669"/>
    <property type="project" value="UniProtKB-KW"/>
</dbReference>
<dbReference type="GO" id="GO:0046872">
    <property type="term" value="F:metal ion binding"/>
    <property type="evidence" value="ECO:0007669"/>
    <property type="project" value="UniProtKB-KW"/>
</dbReference>
<dbReference type="GO" id="GO:0106310">
    <property type="term" value="F:protein serine kinase activity"/>
    <property type="evidence" value="ECO:0007669"/>
    <property type="project" value="RHEA"/>
</dbReference>
<dbReference type="GO" id="GO:0043539">
    <property type="term" value="F:protein serine/threonine kinase activator activity"/>
    <property type="evidence" value="ECO:0000318"/>
    <property type="project" value="GO_Central"/>
</dbReference>
<dbReference type="GO" id="GO:0004674">
    <property type="term" value="F:protein serine/threonine kinase activity"/>
    <property type="evidence" value="ECO:0007669"/>
    <property type="project" value="UniProtKB-KW"/>
</dbReference>
<dbReference type="GO" id="GO:0006611">
    <property type="term" value="P:protein export from nucleus"/>
    <property type="evidence" value="ECO:0000318"/>
    <property type="project" value="GO_Central"/>
</dbReference>
<dbReference type="CDD" id="cd06610">
    <property type="entry name" value="STKc_OSR1_SPAK"/>
    <property type="match status" value="1"/>
</dbReference>
<dbReference type="FunFam" id="1.10.510.10:FF:000947">
    <property type="entry name" value="serine/threonine-protein kinase OSR1"/>
    <property type="match status" value="1"/>
</dbReference>
<dbReference type="Gene3D" id="3.30.200.20">
    <property type="entry name" value="Phosphorylase Kinase, domain 1"/>
    <property type="match status" value="1"/>
</dbReference>
<dbReference type="Gene3D" id="1.10.510.10">
    <property type="entry name" value="Transferase(Phosphotransferase) domain 1"/>
    <property type="match status" value="1"/>
</dbReference>
<dbReference type="InterPro" id="IPR011009">
    <property type="entry name" value="Kinase-like_dom_sf"/>
</dbReference>
<dbReference type="InterPro" id="IPR000719">
    <property type="entry name" value="Prot_kinase_dom"/>
</dbReference>
<dbReference type="InterPro" id="IPR017441">
    <property type="entry name" value="Protein_kinase_ATP_BS"/>
</dbReference>
<dbReference type="InterPro" id="IPR047173">
    <property type="entry name" value="STRAD_A/B-like"/>
</dbReference>
<dbReference type="PANTHER" id="PTHR48014">
    <property type="entry name" value="SERINE/THREONINE-PROTEIN KINASE FRAY2"/>
    <property type="match status" value="1"/>
</dbReference>
<dbReference type="PANTHER" id="PTHR48014:SF21">
    <property type="entry name" value="SERINE_THREONINE-PROTEIN KINASE FRAY2"/>
    <property type="match status" value="1"/>
</dbReference>
<dbReference type="Pfam" id="PF00069">
    <property type="entry name" value="Pkinase"/>
    <property type="match status" value="1"/>
</dbReference>
<dbReference type="SMART" id="SM00220">
    <property type="entry name" value="S_TKc"/>
    <property type="match status" value="1"/>
</dbReference>
<dbReference type="SUPFAM" id="SSF56112">
    <property type="entry name" value="Protein kinase-like (PK-like)"/>
    <property type="match status" value="1"/>
</dbReference>
<dbReference type="PROSITE" id="PS00107">
    <property type="entry name" value="PROTEIN_KINASE_ATP"/>
    <property type="match status" value="1"/>
</dbReference>
<dbReference type="PROSITE" id="PS50011">
    <property type="entry name" value="PROTEIN_KINASE_DOM"/>
    <property type="match status" value="1"/>
</dbReference>
<gene>
    <name evidence="6" type="primary">fray2</name>
    <name type="ORF">DDB_G0229911</name>
</gene>
<keyword id="KW-0067">ATP-binding</keyword>
<keyword id="KW-0418">Kinase</keyword>
<keyword id="KW-0464">Manganese</keyword>
<keyword id="KW-0479">Metal-binding</keyword>
<keyword id="KW-0547">Nucleotide-binding</keyword>
<keyword id="KW-0597">Phosphoprotein</keyword>
<keyword id="KW-1185">Reference proteome</keyword>
<keyword id="KW-0723">Serine/threonine-protein kinase</keyword>
<keyword id="KW-0808">Transferase</keyword>
<feature type="chain" id="PRO_0000361651" description="Serine/threonine-protein kinase fray2">
    <location>
        <begin position="1"/>
        <end position="1028"/>
    </location>
</feature>
<feature type="domain" description="Protein kinase" evidence="3">
    <location>
        <begin position="71"/>
        <end position="330"/>
    </location>
</feature>
<feature type="region of interest" description="Disordered" evidence="4">
    <location>
        <begin position="1"/>
        <end position="67"/>
    </location>
</feature>
<feature type="region of interest" description="Disordered" evidence="4">
    <location>
        <begin position="368"/>
        <end position="467"/>
    </location>
</feature>
<feature type="region of interest" description="Disordered" evidence="4">
    <location>
        <begin position="486"/>
        <end position="561"/>
    </location>
</feature>
<feature type="region of interest" description="Disordered" evidence="4">
    <location>
        <begin position="580"/>
        <end position="914"/>
    </location>
</feature>
<feature type="compositionally biased region" description="Low complexity" evidence="4">
    <location>
        <begin position="20"/>
        <end position="54"/>
    </location>
</feature>
<feature type="compositionally biased region" description="Polar residues" evidence="4">
    <location>
        <begin position="368"/>
        <end position="381"/>
    </location>
</feature>
<feature type="compositionally biased region" description="Low complexity" evidence="4">
    <location>
        <begin position="387"/>
        <end position="419"/>
    </location>
</feature>
<feature type="compositionally biased region" description="Low complexity" evidence="4">
    <location>
        <begin position="432"/>
        <end position="458"/>
    </location>
</feature>
<feature type="compositionally biased region" description="Polar residues" evidence="4">
    <location>
        <begin position="503"/>
        <end position="518"/>
    </location>
</feature>
<feature type="compositionally biased region" description="Polar residues" evidence="4">
    <location>
        <begin position="528"/>
        <end position="542"/>
    </location>
</feature>
<feature type="compositionally biased region" description="Low complexity" evidence="4">
    <location>
        <begin position="543"/>
        <end position="561"/>
    </location>
</feature>
<feature type="compositionally biased region" description="Polar residues" evidence="4">
    <location>
        <begin position="595"/>
        <end position="616"/>
    </location>
</feature>
<feature type="compositionally biased region" description="Low complexity" evidence="4">
    <location>
        <begin position="617"/>
        <end position="642"/>
    </location>
</feature>
<feature type="compositionally biased region" description="Low complexity" evidence="4">
    <location>
        <begin position="683"/>
        <end position="700"/>
    </location>
</feature>
<feature type="compositionally biased region" description="Basic and acidic residues" evidence="4">
    <location>
        <begin position="701"/>
        <end position="714"/>
    </location>
</feature>
<feature type="compositionally biased region" description="Basic and acidic residues" evidence="4">
    <location>
        <begin position="728"/>
        <end position="742"/>
    </location>
</feature>
<feature type="compositionally biased region" description="Basic and acidic residues" evidence="4">
    <location>
        <begin position="753"/>
        <end position="855"/>
    </location>
</feature>
<feature type="compositionally biased region" description="Basic and acidic residues" evidence="4">
    <location>
        <begin position="865"/>
        <end position="893"/>
    </location>
</feature>
<feature type="active site" description="Proton acceptor" evidence="2 3">
    <location>
        <position position="195"/>
    </location>
</feature>
<feature type="binding site" evidence="2 3">
    <location>
        <begin position="77"/>
        <end position="85"/>
    </location>
    <ligand>
        <name>ATP</name>
        <dbReference type="ChEBI" id="CHEBI:30616"/>
    </ligand>
</feature>
<feature type="binding site" evidence="2 3">
    <location>
        <position position="100"/>
    </location>
    <ligand>
        <name>ATP</name>
        <dbReference type="ChEBI" id="CHEBI:30616"/>
    </ligand>
</feature>
<feature type="modified residue" description="Phosphothreonine; by autocatalysis" evidence="1">
    <location>
        <position position="230"/>
    </location>
</feature>